<accession>Q5E9B7</accession>
<sequence length="241" mass="26992">MAEEQPQVELFVKAGSDGAKIGNCPFSQRLFMVLWLKGVTFNVTTVDTKRRTETVQKLCPGGQLPFLLYGTEVHTDTNKIEEFLEAVLCPPRYPKLAALNPESNTAGLDIFAKFSAYIKNSNPALNDNLEKGLLKALKVLDNYLTSPLPDEVDETSAEDEGISQRKFLDGNELTLADCNLLPKLHIVQVVCKKYRGFSIPDVFRGVHRYLRNAYAREEFASTCPDDEEIELAYEQVAKALK</sequence>
<comment type="function">
    <text evidence="2">In the soluble state, catalyzes glutaredoxin-like thiol disulfide exchange reactions with reduced glutathione as electron donor. Reduces selenite and dehydroascorbate and may act as an antioxidant during oxidative stress response (By similarity). Can insert into membranes and form voltage-dependent multi-ion conductive channels. Membrane insertion seems to be redox-regulated and may occur only under oxidizing conditions. Involved in regulation of the cell cycle (By similarity).</text>
</comment>
<comment type="catalytic activity">
    <reaction evidence="2">
        <text>L-dehydroascorbate + 2 glutathione = glutathione disulfide + L-ascorbate</text>
        <dbReference type="Rhea" id="RHEA:24424"/>
        <dbReference type="ChEBI" id="CHEBI:38290"/>
        <dbReference type="ChEBI" id="CHEBI:57925"/>
        <dbReference type="ChEBI" id="CHEBI:58297"/>
        <dbReference type="ChEBI" id="CHEBI:58539"/>
        <dbReference type="EC" id="1.8.5.1"/>
    </reaction>
    <physiologicalReaction direction="left-to-right" evidence="2">
        <dbReference type="Rhea" id="RHEA:24425"/>
    </physiologicalReaction>
</comment>
<comment type="catalytic activity">
    <reaction evidence="2">
        <text>chloride(in) = chloride(out)</text>
        <dbReference type="Rhea" id="RHEA:29823"/>
        <dbReference type="ChEBI" id="CHEBI:17996"/>
    </reaction>
</comment>
<comment type="catalytic activity">
    <reaction evidence="2">
        <text>iodide(out) = iodide(in)</text>
        <dbReference type="Rhea" id="RHEA:66324"/>
        <dbReference type="ChEBI" id="CHEBI:16382"/>
    </reaction>
</comment>
<comment type="catalytic activity">
    <reaction evidence="2">
        <text>thiocyanate(in) = thiocyanate(out)</text>
        <dbReference type="Rhea" id="RHEA:75347"/>
        <dbReference type="ChEBI" id="CHEBI:18022"/>
    </reaction>
</comment>
<comment type="catalytic activity">
    <reaction evidence="2">
        <text>nitrate(in) = nitrate(out)</text>
        <dbReference type="Rhea" id="RHEA:34923"/>
        <dbReference type="ChEBI" id="CHEBI:17632"/>
    </reaction>
</comment>
<comment type="catalytic activity">
    <reaction evidence="2">
        <text>bromide(in) = bromide(out)</text>
        <dbReference type="Rhea" id="RHEA:75383"/>
        <dbReference type="ChEBI" id="CHEBI:15858"/>
    </reaction>
</comment>
<comment type="catalytic activity">
    <reaction evidence="2">
        <text>fluoride(in) = fluoride(out)</text>
        <dbReference type="Rhea" id="RHEA:76159"/>
        <dbReference type="ChEBI" id="CHEBI:17051"/>
    </reaction>
</comment>
<comment type="subunit">
    <text evidence="1">Monomer. Homodimer (in vitro). Interacts with TRAPPC2. Dimerization requires a conformation change that leads to the exposure of a large hydrophobic surface. In vivo, this may lead to membrane insertion (By similarity).</text>
</comment>
<comment type="subcellular location">
    <subcellularLocation>
        <location evidence="2">Nucleus</location>
    </subcellularLocation>
    <subcellularLocation>
        <location evidence="2">Nucleus membrane</location>
        <topology evidence="2">Single-pass membrane protein</topology>
    </subcellularLocation>
    <subcellularLocation>
        <location evidence="2">Cytoplasm</location>
    </subcellularLocation>
    <subcellularLocation>
        <location evidence="2">Cell membrane</location>
        <topology evidence="2">Single-pass membrane protein</topology>
    </subcellularLocation>
    <subcellularLocation>
        <location evidence="3">Endoplasmic reticulum</location>
    </subcellularLocation>
    <text evidence="2 3">Mostly in the nucleus including in the nuclear membrane. Small amount in the cytoplasm and the plasma membrane. Exists both as soluble cytoplasmic protein and as membrane protein with probably a single transmembrane domain (By similarity). Might not be present in the nucleus of cardiac cells (By similarity).</text>
</comment>
<comment type="domain">
    <text evidence="2">The active G-site contains a monothiol Cys-X-X-Ser motif which mediates glutathione-dependent redox catalysis.</text>
</comment>
<comment type="domain">
    <text evidence="2">Members of this family may change from a globular, soluble state to a state where the N-terminal domain is inserted into the membrane and functions as a channel. The redox status of the active cysteine in Cys-X-X-Cys/Ser motif likely determines the capacity to adopt a soluble or membrane-inserted state. A conformation change of the N-terminal domain is thought to expose hydrophobic surfaces that trigger membrane insertion.</text>
</comment>
<comment type="similarity">
    <text evidence="7">Belongs to the chloride channel CLIC family.</text>
</comment>
<reference key="1">
    <citation type="journal article" date="2005" name="BMC Genomics">
        <title>Characterization of 954 bovine full-CDS cDNA sequences.</title>
        <authorList>
            <person name="Harhay G.P."/>
            <person name="Sonstegard T.S."/>
            <person name="Keele J.W."/>
            <person name="Heaton M.P."/>
            <person name="Clawson M.L."/>
            <person name="Snelling W.M."/>
            <person name="Wiedmann R.T."/>
            <person name="Van Tassell C.P."/>
            <person name="Smith T.P.L."/>
        </authorList>
    </citation>
    <scope>NUCLEOTIDE SEQUENCE [LARGE SCALE MRNA]</scope>
</reference>
<reference key="2">
    <citation type="submission" date="2005-08" db="EMBL/GenBank/DDBJ databases">
        <authorList>
            <consortium name="NIH - Mammalian Gene Collection (MGC) project"/>
        </authorList>
    </citation>
    <scope>NUCLEOTIDE SEQUENCE [LARGE SCALE MRNA]</scope>
    <source>
        <strain>Crossbred X Angus</strain>
        <tissue>Ileum</tissue>
    </source>
</reference>
<keyword id="KW-0007">Acetylation</keyword>
<keyword id="KW-1003">Cell membrane</keyword>
<keyword id="KW-0868">Chloride</keyword>
<keyword id="KW-0869">Chloride channel</keyword>
<keyword id="KW-0963">Cytoplasm</keyword>
<keyword id="KW-1015">Disulfide bond</keyword>
<keyword id="KW-0256">Endoplasmic reticulum</keyword>
<keyword id="KW-0407">Ion channel</keyword>
<keyword id="KW-0406">Ion transport</keyword>
<keyword id="KW-0472">Membrane</keyword>
<keyword id="KW-0539">Nucleus</keyword>
<keyword id="KW-0560">Oxidoreductase</keyword>
<keyword id="KW-0597">Phosphoprotein</keyword>
<keyword id="KW-1185">Reference proteome</keyword>
<keyword id="KW-0812">Transmembrane</keyword>
<keyword id="KW-1133">Transmembrane helix</keyword>
<keyword id="KW-0813">Transport</keyword>
<keyword id="KW-0851">Voltage-gated channel</keyword>
<gene>
    <name type="primary">CLIC1</name>
</gene>
<protein>
    <recommendedName>
        <fullName>Chloride intracellular channel protein 1</fullName>
    </recommendedName>
    <alternativeName>
        <fullName evidence="2">Glutaredoxin-like oxidoreductase CLIC1</fullName>
        <ecNumber evidence="2">1.8.-.-</ecNumber>
    </alternativeName>
    <alternativeName>
        <fullName evidence="2">Glutathione-dependent dehydroascorbate reductase CLIC1</fullName>
        <ecNumber evidence="2">1.8.5.1</ecNumber>
    </alternativeName>
</protein>
<evidence type="ECO:0000250" key="1"/>
<evidence type="ECO:0000250" key="2">
    <source>
        <dbReference type="UniProtKB" id="O00299"/>
    </source>
</evidence>
<evidence type="ECO:0000250" key="3">
    <source>
        <dbReference type="UniProtKB" id="Q6MG61"/>
    </source>
</evidence>
<evidence type="ECO:0000250" key="4">
    <source>
        <dbReference type="UniProtKB" id="Q9Z1Q5"/>
    </source>
</evidence>
<evidence type="ECO:0000255" key="5"/>
<evidence type="ECO:0000255" key="6">
    <source>
        <dbReference type="PROSITE-ProRule" id="PRU00685"/>
    </source>
</evidence>
<evidence type="ECO:0000305" key="7"/>
<feature type="initiator methionine" description="Removed" evidence="2">
    <location>
        <position position="1"/>
    </location>
</feature>
<feature type="chain" id="PRO_0000236248" description="Chloride intracellular channel protein 1">
    <location>
        <begin position="2"/>
        <end position="241"/>
    </location>
</feature>
<feature type="transmembrane region" description="Helical; Note=After insertion into the membrane" evidence="5">
    <location>
        <begin position="26"/>
        <end position="46"/>
    </location>
</feature>
<feature type="domain" description="GST C-terminal" evidence="6">
    <location>
        <begin position="93"/>
        <end position="233"/>
    </location>
</feature>
<feature type="region of interest" description="Required for insertion into the membrane" evidence="1">
    <location>
        <begin position="2"/>
        <end position="90"/>
    </location>
</feature>
<feature type="short sequence motif" description="G-site" evidence="2">
    <location>
        <begin position="24"/>
        <end position="27"/>
    </location>
</feature>
<feature type="modified residue" description="N-acetylalanine" evidence="2">
    <location>
        <position position="2"/>
    </location>
</feature>
<feature type="modified residue" description="N6-acetyllysine" evidence="2">
    <location>
        <position position="13"/>
    </location>
</feature>
<feature type="modified residue" description="N6-acetyllysine" evidence="2">
    <location>
        <position position="119"/>
    </location>
</feature>
<feature type="modified residue" description="Phosphoserine" evidence="2">
    <location>
        <position position="121"/>
    </location>
</feature>
<feature type="modified residue" description="N6-acetyllysine" evidence="2">
    <location>
        <position position="131"/>
    </location>
</feature>
<feature type="modified residue" description="Phosphoserine" evidence="2">
    <location>
        <position position="156"/>
    </location>
</feature>
<feature type="modified residue" description="Phosphotyrosine" evidence="4">
    <location>
        <position position="233"/>
    </location>
</feature>
<feature type="disulfide bond" evidence="1">
    <location>
        <begin position="24"/>
        <end position="59"/>
    </location>
</feature>
<dbReference type="EC" id="1.8.-.-" evidence="2"/>
<dbReference type="EC" id="1.8.5.1" evidence="2"/>
<dbReference type="EMBL" id="BT021003">
    <property type="protein sequence ID" value="AAX09020.1"/>
    <property type="molecule type" value="mRNA"/>
</dbReference>
<dbReference type="EMBL" id="BC102103">
    <property type="protein sequence ID" value="AAI02104.1"/>
    <property type="molecule type" value="mRNA"/>
</dbReference>
<dbReference type="RefSeq" id="NP_001015608.1">
    <property type="nucleotide sequence ID" value="NM_001015608.1"/>
</dbReference>
<dbReference type="SMR" id="Q5E9B7"/>
<dbReference type="FunCoup" id="Q5E9B7">
    <property type="interactions" value="1582"/>
</dbReference>
<dbReference type="STRING" id="9913.ENSBTAP00000017995"/>
<dbReference type="PaxDb" id="9913-ENSBTAP00000017995"/>
<dbReference type="PeptideAtlas" id="Q5E9B7"/>
<dbReference type="Ensembl" id="ENSBTAT00000017995.4">
    <property type="protein sequence ID" value="ENSBTAP00000017995.2"/>
    <property type="gene ID" value="ENSBTAG00000013533.4"/>
</dbReference>
<dbReference type="GeneID" id="515646"/>
<dbReference type="KEGG" id="bta:515646"/>
<dbReference type="CTD" id="1192"/>
<dbReference type="VEuPathDB" id="HostDB:ENSBTAG00000013533"/>
<dbReference type="VGNC" id="VGNC:27439">
    <property type="gene designation" value="CLIC1"/>
</dbReference>
<dbReference type="eggNOG" id="KOG1422">
    <property type="taxonomic scope" value="Eukaryota"/>
</dbReference>
<dbReference type="GeneTree" id="ENSGT00940000154708"/>
<dbReference type="HOGENOM" id="CLU_061051_1_0_1"/>
<dbReference type="InParanoid" id="Q5E9B7"/>
<dbReference type="OMA" id="SYMKAIF"/>
<dbReference type="OrthoDB" id="1935530at2759"/>
<dbReference type="TreeFam" id="TF315438"/>
<dbReference type="Proteomes" id="UP000009136">
    <property type="component" value="Chromosome 23"/>
</dbReference>
<dbReference type="Bgee" id="ENSBTAG00000013533">
    <property type="expression patterns" value="Expressed in abomasum and 106 other cell types or tissues"/>
</dbReference>
<dbReference type="GO" id="GO:0034707">
    <property type="term" value="C:chloride channel complex"/>
    <property type="evidence" value="ECO:0007669"/>
    <property type="project" value="UniProtKB-KW"/>
</dbReference>
<dbReference type="GO" id="GO:0005737">
    <property type="term" value="C:cytoplasm"/>
    <property type="evidence" value="ECO:0000250"/>
    <property type="project" value="UniProtKB"/>
</dbReference>
<dbReference type="GO" id="GO:0005783">
    <property type="term" value="C:endoplasmic reticulum"/>
    <property type="evidence" value="ECO:0007669"/>
    <property type="project" value="UniProtKB-SubCell"/>
</dbReference>
<dbReference type="GO" id="GO:0016020">
    <property type="term" value="C:membrane"/>
    <property type="evidence" value="ECO:0000318"/>
    <property type="project" value="GO_Central"/>
</dbReference>
<dbReference type="GO" id="GO:0031965">
    <property type="term" value="C:nuclear membrane"/>
    <property type="evidence" value="ECO:0007669"/>
    <property type="project" value="UniProtKB-SubCell"/>
</dbReference>
<dbReference type="GO" id="GO:0005886">
    <property type="term" value="C:plasma membrane"/>
    <property type="evidence" value="ECO:0007669"/>
    <property type="project" value="UniProtKB-SubCell"/>
</dbReference>
<dbReference type="GO" id="GO:0005254">
    <property type="term" value="F:chloride channel activity"/>
    <property type="evidence" value="ECO:0000318"/>
    <property type="project" value="GO_Central"/>
</dbReference>
<dbReference type="GO" id="GO:0016491">
    <property type="term" value="F:oxidoreductase activity"/>
    <property type="evidence" value="ECO:0007669"/>
    <property type="project" value="UniProtKB-KW"/>
</dbReference>
<dbReference type="GO" id="GO:0006821">
    <property type="term" value="P:chloride transport"/>
    <property type="evidence" value="ECO:0000318"/>
    <property type="project" value="GO_Central"/>
</dbReference>
<dbReference type="CDD" id="cd10300">
    <property type="entry name" value="GST_C_CLIC1"/>
    <property type="match status" value="1"/>
</dbReference>
<dbReference type="CDD" id="cd03061">
    <property type="entry name" value="GST_N_CLIC"/>
    <property type="match status" value="1"/>
</dbReference>
<dbReference type="FunFam" id="1.20.1050.10:FF:000001">
    <property type="entry name" value="Chloride intracellular channel 2"/>
    <property type="match status" value="1"/>
</dbReference>
<dbReference type="FunFam" id="3.40.30.10:FF:000129">
    <property type="entry name" value="Chloride intracellular channel protein 1"/>
    <property type="match status" value="1"/>
</dbReference>
<dbReference type="Gene3D" id="1.20.1050.10">
    <property type="match status" value="1"/>
</dbReference>
<dbReference type="Gene3D" id="3.40.30.10">
    <property type="entry name" value="Glutaredoxin"/>
    <property type="match status" value="1"/>
</dbReference>
<dbReference type="InterPro" id="IPR002946">
    <property type="entry name" value="CLIC"/>
</dbReference>
<dbReference type="InterPro" id="IPR030259">
    <property type="entry name" value="CLIC-1_C"/>
</dbReference>
<dbReference type="InterPro" id="IPR053823">
    <property type="entry name" value="CLIC_N"/>
</dbReference>
<dbReference type="InterPro" id="IPR010987">
    <property type="entry name" value="Glutathione-S-Trfase_C-like"/>
</dbReference>
<dbReference type="InterPro" id="IPR036282">
    <property type="entry name" value="Glutathione-S-Trfase_C_sf"/>
</dbReference>
<dbReference type="InterPro" id="IPR040079">
    <property type="entry name" value="Glutathione_S-Trfase"/>
</dbReference>
<dbReference type="InterPro" id="IPR036249">
    <property type="entry name" value="Thioredoxin-like_sf"/>
</dbReference>
<dbReference type="NCBIfam" id="TIGR00862">
    <property type="entry name" value="O-ClC"/>
    <property type="match status" value="1"/>
</dbReference>
<dbReference type="PANTHER" id="PTHR45476:SF2">
    <property type="entry name" value="CHLORIDE INTRACELLULAR CHANNEL PROTEIN"/>
    <property type="match status" value="1"/>
</dbReference>
<dbReference type="PANTHER" id="PTHR45476">
    <property type="entry name" value="CHLORIDE INTRACELLULAR CHANNEL PROTEIN 6-RELATED"/>
    <property type="match status" value="1"/>
</dbReference>
<dbReference type="Pfam" id="PF22441">
    <property type="entry name" value="CLIC-like_N"/>
    <property type="match status" value="1"/>
</dbReference>
<dbReference type="Pfam" id="PF13410">
    <property type="entry name" value="GST_C_2"/>
    <property type="match status" value="1"/>
</dbReference>
<dbReference type="PRINTS" id="PR01263">
    <property type="entry name" value="INTCLCHANNEL"/>
</dbReference>
<dbReference type="SFLD" id="SFLDS00019">
    <property type="entry name" value="Glutathione_Transferase_(cytos"/>
    <property type="match status" value="1"/>
</dbReference>
<dbReference type="SFLD" id="SFLDG00358">
    <property type="entry name" value="Main_(cytGST)"/>
    <property type="match status" value="1"/>
</dbReference>
<dbReference type="SUPFAM" id="SSF47616">
    <property type="entry name" value="GST C-terminal domain-like"/>
    <property type="match status" value="1"/>
</dbReference>
<dbReference type="SUPFAM" id="SSF52833">
    <property type="entry name" value="Thioredoxin-like"/>
    <property type="match status" value="1"/>
</dbReference>
<dbReference type="PROSITE" id="PS50405">
    <property type="entry name" value="GST_CTER"/>
    <property type="match status" value="1"/>
</dbReference>
<name>CLIC1_BOVIN</name>
<proteinExistence type="evidence at transcript level"/>
<organism>
    <name type="scientific">Bos taurus</name>
    <name type="common">Bovine</name>
    <dbReference type="NCBI Taxonomy" id="9913"/>
    <lineage>
        <taxon>Eukaryota</taxon>
        <taxon>Metazoa</taxon>
        <taxon>Chordata</taxon>
        <taxon>Craniata</taxon>
        <taxon>Vertebrata</taxon>
        <taxon>Euteleostomi</taxon>
        <taxon>Mammalia</taxon>
        <taxon>Eutheria</taxon>
        <taxon>Laurasiatheria</taxon>
        <taxon>Artiodactyla</taxon>
        <taxon>Ruminantia</taxon>
        <taxon>Pecora</taxon>
        <taxon>Bovidae</taxon>
        <taxon>Bovinae</taxon>
        <taxon>Bos</taxon>
    </lineage>
</organism>